<comment type="function">
    <text evidence="1">Monomeric heme protein which primary function is to store oxygen and facilitate its diffusion within muscle tissues. Reversibly binds oxygen through a pentacoordinated heme iron and enables its timely and efficient release as needed during periods of heightened demand. Depending on the oxidative conditions of tissues and cells, and in addition to its ability to bind oxygen, it also has a nitrite reductase activity whereby it regulates the production of bioactive nitric oxide. Under stress conditions, like hypoxia and anoxia, it also protects cells against reactive oxygen species thanks to its pseudoperoxidase activity.</text>
</comment>
<comment type="catalytic activity">
    <reaction evidence="1">
        <text>Fe(III)-heme b-[protein] + nitric oxide + H2O = Fe(II)-heme b-[protein] + nitrite + 2 H(+)</text>
        <dbReference type="Rhea" id="RHEA:77711"/>
        <dbReference type="Rhea" id="RHEA-COMP:18975"/>
        <dbReference type="Rhea" id="RHEA-COMP:18976"/>
        <dbReference type="ChEBI" id="CHEBI:15377"/>
        <dbReference type="ChEBI" id="CHEBI:15378"/>
        <dbReference type="ChEBI" id="CHEBI:16301"/>
        <dbReference type="ChEBI" id="CHEBI:16480"/>
        <dbReference type="ChEBI" id="CHEBI:55376"/>
        <dbReference type="ChEBI" id="CHEBI:60344"/>
    </reaction>
    <physiologicalReaction direction="right-to-left" evidence="1">
        <dbReference type="Rhea" id="RHEA:77713"/>
    </physiologicalReaction>
</comment>
<comment type="catalytic activity">
    <reaction evidence="1">
        <text>H2O2 + AH2 = A + 2 H2O</text>
        <dbReference type="Rhea" id="RHEA:30275"/>
        <dbReference type="ChEBI" id="CHEBI:13193"/>
        <dbReference type="ChEBI" id="CHEBI:15377"/>
        <dbReference type="ChEBI" id="CHEBI:16240"/>
        <dbReference type="ChEBI" id="CHEBI:17499"/>
    </reaction>
</comment>
<comment type="subunit">
    <text evidence="2">Monomeric.</text>
</comment>
<comment type="subcellular location">
    <subcellularLocation>
        <location evidence="1">Cytoplasm</location>
        <location evidence="1">Sarcoplasm</location>
    </subcellularLocation>
</comment>
<comment type="similarity">
    <text evidence="7">Belongs to the globin family.</text>
</comment>
<evidence type="ECO:0000250" key="1">
    <source>
        <dbReference type="UniProtKB" id="P02144"/>
    </source>
</evidence>
<evidence type="ECO:0000250" key="2">
    <source>
        <dbReference type="UniProtKB" id="P02185"/>
    </source>
</evidence>
<evidence type="ECO:0000250" key="3">
    <source>
        <dbReference type="UniProtKB" id="P02189"/>
    </source>
</evidence>
<evidence type="ECO:0000250" key="4">
    <source>
        <dbReference type="UniProtKB" id="P04247"/>
    </source>
</evidence>
<evidence type="ECO:0000250" key="5">
    <source>
        <dbReference type="UniProtKB" id="P68082"/>
    </source>
</evidence>
<evidence type="ECO:0000250" key="6">
    <source>
        <dbReference type="UniProtKB" id="Q9QZ76"/>
    </source>
</evidence>
<evidence type="ECO:0000255" key="7">
    <source>
        <dbReference type="PROSITE-ProRule" id="PRU00238"/>
    </source>
</evidence>
<evidence type="ECO:0000269" key="8">
    <source ref="1"/>
</evidence>
<sequence>MGLSDGEWQLVLHVWGKVEADLAGHGQEVLIRLFKGHPETLEKFNKFKHIKSEDEMKASEDLKKHGVTVLTALGGVLKKKGHHEAEIKPLAQSHATKHKIPIKYLEFISEAIIHVLQSKHPGBFGADABGAMNKALELFRKDIAAKYKELGFQG</sequence>
<name>MYG_CASFI</name>
<dbReference type="EC" id="1.7.-.-" evidence="1"/>
<dbReference type="EC" id="1.11.1.-" evidence="1"/>
<dbReference type="PIR" id="JN0410">
    <property type="entry name" value="JN0410"/>
</dbReference>
<dbReference type="GO" id="GO:0070062">
    <property type="term" value="C:extracellular exosome"/>
    <property type="evidence" value="ECO:0007669"/>
    <property type="project" value="TreeGrafter"/>
</dbReference>
<dbReference type="GO" id="GO:0016528">
    <property type="term" value="C:sarcoplasm"/>
    <property type="evidence" value="ECO:0000250"/>
    <property type="project" value="UniProtKB"/>
</dbReference>
<dbReference type="GO" id="GO:0020037">
    <property type="term" value="F:heme binding"/>
    <property type="evidence" value="ECO:0007669"/>
    <property type="project" value="InterPro"/>
</dbReference>
<dbReference type="GO" id="GO:0046872">
    <property type="term" value="F:metal ion binding"/>
    <property type="evidence" value="ECO:0007669"/>
    <property type="project" value="UniProtKB-KW"/>
</dbReference>
<dbReference type="GO" id="GO:0098809">
    <property type="term" value="F:nitrite reductase activity"/>
    <property type="evidence" value="ECO:0000250"/>
    <property type="project" value="UniProtKB"/>
</dbReference>
<dbReference type="GO" id="GO:0019825">
    <property type="term" value="F:oxygen binding"/>
    <property type="evidence" value="ECO:0007669"/>
    <property type="project" value="InterPro"/>
</dbReference>
<dbReference type="GO" id="GO:0005344">
    <property type="term" value="F:oxygen carrier activity"/>
    <property type="evidence" value="ECO:0000250"/>
    <property type="project" value="UniProtKB"/>
</dbReference>
<dbReference type="GO" id="GO:0004601">
    <property type="term" value="F:peroxidase activity"/>
    <property type="evidence" value="ECO:0000250"/>
    <property type="project" value="UniProtKB"/>
</dbReference>
<dbReference type="GO" id="GO:0019430">
    <property type="term" value="P:removal of superoxide radicals"/>
    <property type="evidence" value="ECO:0000250"/>
    <property type="project" value="UniProtKB"/>
</dbReference>
<dbReference type="CDD" id="cd08926">
    <property type="entry name" value="Mb"/>
    <property type="match status" value="1"/>
</dbReference>
<dbReference type="Gene3D" id="6.10.140.2100">
    <property type="match status" value="1"/>
</dbReference>
<dbReference type="Gene3D" id="6.10.140.2110">
    <property type="match status" value="1"/>
</dbReference>
<dbReference type="InterPro" id="IPR000971">
    <property type="entry name" value="Globin"/>
</dbReference>
<dbReference type="InterPro" id="IPR009050">
    <property type="entry name" value="Globin-like_sf"/>
</dbReference>
<dbReference type="InterPro" id="IPR002335">
    <property type="entry name" value="Myoglobin"/>
</dbReference>
<dbReference type="PANTHER" id="PTHR47132">
    <property type="entry name" value="MYOGLOBIN"/>
    <property type="match status" value="1"/>
</dbReference>
<dbReference type="PANTHER" id="PTHR47132:SF1">
    <property type="entry name" value="MYOGLOBIN"/>
    <property type="match status" value="1"/>
</dbReference>
<dbReference type="Pfam" id="PF00042">
    <property type="entry name" value="Globin"/>
    <property type="match status" value="1"/>
</dbReference>
<dbReference type="PRINTS" id="PR00613">
    <property type="entry name" value="MYOGLOBIN"/>
</dbReference>
<dbReference type="SUPFAM" id="SSF46458">
    <property type="entry name" value="Globin-like"/>
    <property type="match status" value="1"/>
</dbReference>
<dbReference type="PROSITE" id="PS01033">
    <property type="entry name" value="GLOBIN"/>
    <property type="match status" value="1"/>
</dbReference>
<reference key="1">
    <citation type="journal article" date="1980" name="Bioorg. Khim.">
        <title>The primary structure of myoglobin from beaver (Castor fiber); II peptic peptides of the tryptic insoluble core. Reconstruction of beaver myoglobin polypeptide chain.</title>
        <authorList>
            <person name="Sukhomlinov B.F."/>
            <person name="Drobot L.B."/>
        </authorList>
    </citation>
    <scope>PROTEIN SEQUENCE OF 2-154</scope>
</reference>
<accession>P14396</accession>
<feature type="initiator methionine" description="Removed" evidence="8">
    <location>
        <position position="1"/>
    </location>
</feature>
<feature type="chain" id="PRO_0000053283" description="Myoglobin">
    <location>
        <begin position="2"/>
        <end position="154"/>
    </location>
</feature>
<feature type="domain" description="Globin" evidence="7">
    <location>
        <begin position="2"/>
        <end position="148"/>
    </location>
</feature>
<feature type="binding site" evidence="5">
    <location>
        <position position="65"/>
    </location>
    <ligand>
        <name>nitrite</name>
        <dbReference type="ChEBI" id="CHEBI:16301"/>
    </ligand>
</feature>
<feature type="binding site" evidence="3 7">
    <location>
        <position position="65"/>
    </location>
    <ligand>
        <name>O2</name>
        <dbReference type="ChEBI" id="CHEBI:15379"/>
    </ligand>
</feature>
<feature type="binding site" description="proximal binding residue" evidence="1">
    <location>
        <position position="94"/>
    </location>
    <ligand>
        <name>heme b</name>
        <dbReference type="ChEBI" id="CHEBI:60344"/>
    </ligand>
    <ligandPart>
        <name>Fe</name>
        <dbReference type="ChEBI" id="CHEBI:18248"/>
    </ligandPart>
</feature>
<feature type="modified residue" description="Phosphoserine" evidence="6">
    <location>
        <position position="4"/>
    </location>
</feature>
<feature type="modified residue" description="Phosphothreonine" evidence="4">
    <location>
        <position position="68"/>
    </location>
</feature>
<gene>
    <name type="primary">MB</name>
</gene>
<keyword id="KW-0963">Cytoplasm</keyword>
<keyword id="KW-0903">Direct protein sequencing</keyword>
<keyword id="KW-0349">Heme</keyword>
<keyword id="KW-0408">Iron</keyword>
<keyword id="KW-0479">Metal-binding</keyword>
<keyword id="KW-0514">Muscle protein</keyword>
<keyword id="KW-0560">Oxidoreductase</keyword>
<keyword id="KW-0561">Oxygen transport</keyword>
<keyword id="KW-0597">Phosphoprotein</keyword>
<keyword id="KW-0813">Transport</keyword>
<protein>
    <recommendedName>
        <fullName>Myoglobin</fullName>
    </recommendedName>
    <alternativeName>
        <fullName evidence="1">Nitrite reductase MB</fullName>
        <ecNumber evidence="1">1.7.-.-</ecNumber>
    </alternativeName>
    <alternativeName>
        <fullName evidence="1">Pseudoperoxidase MB</fullName>
        <ecNumber evidence="1">1.11.1.-</ecNumber>
    </alternativeName>
</protein>
<organism>
    <name type="scientific">Castor fiber</name>
    <name type="common">Eurasian beaver</name>
    <dbReference type="NCBI Taxonomy" id="10185"/>
    <lineage>
        <taxon>Eukaryota</taxon>
        <taxon>Metazoa</taxon>
        <taxon>Chordata</taxon>
        <taxon>Craniata</taxon>
        <taxon>Vertebrata</taxon>
        <taxon>Euteleostomi</taxon>
        <taxon>Mammalia</taxon>
        <taxon>Eutheria</taxon>
        <taxon>Euarchontoglires</taxon>
        <taxon>Glires</taxon>
        <taxon>Rodentia</taxon>
        <taxon>Castorimorpha</taxon>
        <taxon>Castoridae</taxon>
        <taxon>Castor</taxon>
    </lineage>
</organism>
<proteinExistence type="evidence at protein level"/>